<feature type="chain" id="PRO_0000276366" description="Large ribosomal subunit protein uL14c">
    <location>
        <begin position="1"/>
        <end position="122"/>
    </location>
</feature>
<geneLocation type="chloroplast"/>
<protein>
    <recommendedName>
        <fullName evidence="1">Large ribosomal subunit protein uL14c</fullName>
    </recommendedName>
    <alternativeName>
        <fullName evidence="2">50S ribosomal protein L14, chloroplastic</fullName>
    </alternativeName>
</protein>
<name>RK14_SOLTU</name>
<reference key="1">
    <citation type="journal article" date="2006" name="Plant Cell Rep.">
        <title>The complete chloroplast genome sequences of Solanum tuberosum and comparative analysis with Solanaceae species identified the presence of a 241-bp deletion in cultivated potato chloroplast DNA sequence.</title>
        <authorList>
            <person name="Chung H.-J."/>
            <person name="Jung J.D."/>
            <person name="Park H.-W."/>
            <person name="Kim J.-H."/>
            <person name="Cha H.W."/>
            <person name="Min S.R."/>
            <person name="Jeong W.-J."/>
            <person name="Liu J.R."/>
        </authorList>
    </citation>
    <scope>NUCLEOTIDE SEQUENCE [LARGE SCALE GENOMIC DNA]</scope>
    <source>
        <strain>cv. Desiree</strain>
    </source>
</reference>
<reference key="2">
    <citation type="submission" date="2006-02" db="EMBL/GenBank/DDBJ databases">
        <title>Complete chloroplast genome sequences of Solanum tuberosum cultivar Desiree and comparative analyses with other Solanaceae genomes.</title>
        <authorList>
            <person name="Gargano D."/>
            <person name="Scotti N."/>
            <person name="Vezzi A."/>
            <person name="Bilardi A."/>
            <person name="Valle G."/>
            <person name="Grillo S."/>
            <person name="Cardi T."/>
        </authorList>
    </citation>
    <scope>NUCLEOTIDE SEQUENCE [LARGE SCALE GENOMIC DNA]</scope>
    <source>
        <strain>cv. Desiree</strain>
    </source>
</reference>
<organism>
    <name type="scientific">Solanum tuberosum</name>
    <name type="common">Potato</name>
    <dbReference type="NCBI Taxonomy" id="4113"/>
    <lineage>
        <taxon>Eukaryota</taxon>
        <taxon>Viridiplantae</taxon>
        <taxon>Streptophyta</taxon>
        <taxon>Embryophyta</taxon>
        <taxon>Tracheophyta</taxon>
        <taxon>Spermatophyta</taxon>
        <taxon>Magnoliopsida</taxon>
        <taxon>eudicotyledons</taxon>
        <taxon>Gunneridae</taxon>
        <taxon>Pentapetalae</taxon>
        <taxon>asterids</taxon>
        <taxon>lamiids</taxon>
        <taxon>Solanales</taxon>
        <taxon>Solanaceae</taxon>
        <taxon>Solanoideae</taxon>
        <taxon>Solaneae</taxon>
        <taxon>Solanum</taxon>
    </lineage>
</organism>
<dbReference type="EMBL" id="DQ231562">
    <property type="protein sequence ID" value="ABB90075.1"/>
    <property type="molecule type" value="Genomic_DNA"/>
</dbReference>
<dbReference type="EMBL" id="DQ386163">
    <property type="protein sequence ID" value="ABD47092.1"/>
    <property type="molecule type" value="Genomic_DNA"/>
</dbReference>
<dbReference type="RefSeq" id="YP_635675.1">
    <property type="nucleotide sequence ID" value="NC_008096.2"/>
</dbReference>
<dbReference type="SMR" id="Q2VEE4"/>
<dbReference type="FunCoup" id="Q2VEE4">
    <property type="interactions" value="477"/>
</dbReference>
<dbReference type="STRING" id="4113.Q2VEE4"/>
<dbReference type="PaxDb" id="4113-PGSC0003DMT400036533"/>
<dbReference type="GeneID" id="4099880"/>
<dbReference type="KEGG" id="sot:4099880"/>
<dbReference type="eggNOG" id="KOG0901">
    <property type="taxonomic scope" value="Eukaryota"/>
</dbReference>
<dbReference type="InParanoid" id="Q2VEE4"/>
<dbReference type="OrthoDB" id="274765at2759"/>
<dbReference type="Proteomes" id="UP000011115">
    <property type="component" value="Unassembled WGS sequence"/>
</dbReference>
<dbReference type="ExpressionAtlas" id="Q2VEE4">
    <property type="expression patterns" value="baseline"/>
</dbReference>
<dbReference type="GO" id="GO:0009507">
    <property type="term" value="C:chloroplast"/>
    <property type="evidence" value="ECO:0007669"/>
    <property type="project" value="UniProtKB-SubCell"/>
</dbReference>
<dbReference type="GO" id="GO:0022625">
    <property type="term" value="C:cytosolic large ribosomal subunit"/>
    <property type="evidence" value="ECO:0000318"/>
    <property type="project" value="GO_Central"/>
</dbReference>
<dbReference type="GO" id="GO:0070180">
    <property type="term" value="F:large ribosomal subunit rRNA binding"/>
    <property type="evidence" value="ECO:0000318"/>
    <property type="project" value="GO_Central"/>
</dbReference>
<dbReference type="GO" id="GO:0003735">
    <property type="term" value="F:structural constituent of ribosome"/>
    <property type="evidence" value="ECO:0000318"/>
    <property type="project" value="GO_Central"/>
</dbReference>
<dbReference type="GO" id="GO:0006412">
    <property type="term" value="P:translation"/>
    <property type="evidence" value="ECO:0007669"/>
    <property type="project" value="UniProtKB-UniRule"/>
</dbReference>
<dbReference type="CDD" id="cd00337">
    <property type="entry name" value="Ribosomal_uL14"/>
    <property type="match status" value="1"/>
</dbReference>
<dbReference type="FunFam" id="2.40.150.20:FF:000002">
    <property type="entry name" value="50S ribosomal protein L14, chloroplastic"/>
    <property type="match status" value="1"/>
</dbReference>
<dbReference type="Gene3D" id="2.40.150.20">
    <property type="entry name" value="Ribosomal protein L14"/>
    <property type="match status" value="1"/>
</dbReference>
<dbReference type="HAMAP" id="MF_01367">
    <property type="entry name" value="Ribosomal_uL14"/>
    <property type="match status" value="1"/>
</dbReference>
<dbReference type="InterPro" id="IPR000218">
    <property type="entry name" value="Ribosomal_uL14"/>
</dbReference>
<dbReference type="InterPro" id="IPR005745">
    <property type="entry name" value="Ribosomal_uL14_bac-type"/>
</dbReference>
<dbReference type="InterPro" id="IPR019972">
    <property type="entry name" value="Ribosomal_uL14_CS"/>
</dbReference>
<dbReference type="InterPro" id="IPR036853">
    <property type="entry name" value="Ribosomal_uL14_sf"/>
</dbReference>
<dbReference type="NCBIfam" id="TIGR01067">
    <property type="entry name" value="rplN_bact"/>
    <property type="match status" value="1"/>
</dbReference>
<dbReference type="PANTHER" id="PTHR11761">
    <property type="entry name" value="50S/60S RIBOSOMAL PROTEIN L14/L23"/>
    <property type="match status" value="1"/>
</dbReference>
<dbReference type="PANTHER" id="PTHR11761:SF3">
    <property type="entry name" value="LARGE RIBOSOMAL SUBUNIT PROTEIN UL14M"/>
    <property type="match status" value="1"/>
</dbReference>
<dbReference type="Pfam" id="PF00238">
    <property type="entry name" value="Ribosomal_L14"/>
    <property type="match status" value="1"/>
</dbReference>
<dbReference type="SMART" id="SM01374">
    <property type="entry name" value="Ribosomal_L14"/>
    <property type="match status" value="1"/>
</dbReference>
<dbReference type="SUPFAM" id="SSF50193">
    <property type="entry name" value="Ribosomal protein L14"/>
    <property type="match status" value="1"/>
</dbReference>
<dbReference type="PROSITE" id="PS00049">
    <property type="entry name" value="RIBOSOMAL_L14"/>
    <property type="match status" value="1"/>
</dbReference>
<keyword id="KW-0150">Chloroplast</keyword>
<keyword id="KW-0934">Plastid</keyword>
<keyword id="KW-1185">Reference proteome</keyword>
<keyword id="KW-0687">Ribonucleoprotein</keyword>
<keyword id="KW-0689">Ribosomal protein</keyword>
<keyword id="KW-0694">RNA-binding</keyword>
<keyword id="KW-0699">rRNA-binding</keyword>
<accession>Q2VEE4</accession>
<evidence type="ECO:0000255" key="1">
    <source>
        <dbReference type="HAMAP-Rule" id="MF_01367"/>
    </source>
</evidence>
<evidence type="ECO:0000305" key="2"/>
<gene>
    <name evidence="1" type="primary">rpl14</name>
</gene>
<sequence length="122" mass="13578">MIQPQTHLNVADNSGARELMCIRIIGASNRRYAHIGDVIVAVIKEAVPNMPLERSEVVRAVIVRTCKELKRDNGMIIRYDDNAAVVIDQEGNPKGTRIFGAIARELRELNFTKIVSLAPEVL</sequence>
<proteinExistence type="inferred from homology"/>
<comment type="function">
    <text evidence="1">Binds to 23S rRNA.</text>
</comment>
<comment type="subunit">
    <text evidence="1">Part of the 50S ribosomal subunit.</text>
</comment>
<comment type="subcellular location">
    <subcellularLocation>
        <location>Plastid</location>
        <location>Chloroplast</location>
    </subcellularLocation>
</comment>
<comment type="similarity">
    <text evidence="1">Belongs to the universal ribosomal protein uL14 family.</text>
</comment>